<evidence type="ECO:0000305" key="1"/>
<reference key="1">
    <citation type="journal article" date="2005" name="J. Bacteriol.">
        <title>Insights on evolution of virulence and resistance from the complete genome analysis of an early methicillin-resistant Staphylococcus aureus strain and a biofilm-producing methicillin-resistant Staphylococcus epidermidis strain.</title>
        <authorList>
            <person name="Gill S.R."/>
            <person name="Fouts D.E."/>
            <person name="Archer G.L."/>
            <person name="Mongodin E.F."/>
            <person name="DeBoy R.T."/>
            <person name="Ravel J."/>
            <person name="Paulsen I.T."/>
            <person name="Kolonay J.F."/>
            <person name="Brinkac L.M."/>
            <person name="Beanan M.J."/>
            <person name="Dodson R.J."/>
            <person name="Daugherty S.C."/>
            <person name="Madupu R."/>
            <person name="Angiuoli S.V."/>
            <person name="Durkin A.S."/>
            <person name="Haft D.H."/>
            <person name="Vamathevan J.J."/>
            <person name="Khouri H."/>
            <person name="Utterback T.R."/>
            <person name="Lee C."/>
            <person name="Dimitrov G."/>
            <person name="Jiang L."/>
            <person name="Qin H."/>
            <person name="Weidman J."/>
            <person name="Tran K."/>
            <person name="Kang K.H."/>
            <person name="Hance I.R."/>
            <person name="Nelson K.E."/>
            <person name="Fraser C.M."/>
        </authorList>
    </citation>
    <scope>NUCLEOTIDE SEQUENCE [LARGE SCALE GENOMIC DNA]</scope>
    <source>
        <strain>COL</strain>
    </source>
</reference>
<keyword id="KW-0378">Hydrolase</keyword>
<organism>
    <name type="scientific">Staphylococcus aureus (strain COL)</name>
    <dbReference type="NCBI Taxonomy" id="93062"/>
    <lineage>
        <taxon>Bacteria</taxon>
        <taxon>Bacillati</taxon>
        <taxon>Bacillota</taxon>
        <taxon>Bacilli</taxon>
        <taxon>Bacillales</taxon>
        <taxon>Staphylococcaceae</taxon>
        <taxon>Staphylococcus</taxon>
    </lineage>
</organism>
<sequence length="271" mass="31837">MSKRLLLFDFDETYFKHNTNEEDLSHLREMEKLLEKLTNNNEVITAVLTGSTFQSVMDKMDQVNMTFKPLHIFSDLSSKMFTWNNGEYVESETYKKKVLSEPFLFEDIEDILRHISAQYNVEFIPQRAFEGNETHYNFYFHSTGNHNNDSRILEALVRYANDQNYTARFSRSNPLAGDPENAYDIDFTPSNAGKLYATQFLMRKYNIPVKSILGFGDSGNDEAYLSYLEHAYLMSNSRDEALKQKFRLTKYPYYQGITLHVKEFVEGKYDY</sequence>
<name>Y2196_STAAC</name>
<feature type="chain" id="PRO_0000296086" description="Uncharacterized hydrolase SACOL2196">
    <location>
        <begin position="1"/>
        <end position="271"/>
    </location>
</feature>
<comment type="similarity">
    <text evidence="1">Belongs to the HAD-like hydrolase superfamily.</text>
</comment>
<gene>
    <name type="ordered locus">SACOL2196</name>
</gene>
<proteinExistence type="inferred from homology"/>
<dbReference type="EC" id="3.-.-.-"/>
<dbReference type="EMBL" id="CP000046">
    <property type="protein sequence ID" value="AAW37072.1"/>
    <property type="molecule type" value="Genomic_DNA"/>
</dbReference>
<dbReference type="RefSeq" id="WP_000044363.1">
    <property type="nucleotide sequence ID" value="NZ_JBGOFO010000004.1"/>
</dbReference>
<dbReference type="SMR" id="Q5HE00"/>
<dbReference type="KEGG" id="sac:SACOL2196"/>
<dbReference type="HOGENOM" id="CLU_084693_0_0_9"/>
<dbReference type="Proteomes" id="UP000000530">
    <property type="component" value="Chromosome"/>
</dbReference>
<dbReference type="GO" id="GO:0005829">
    <property type="term" value="C:cytosol"/>
    <property type="evidence" value="ECO:0007669"/>
    <property type="project" value="TreeGrafter"/>
</dbReference>
<dbReference type="GO" id="GO:0000287">
    <property type="term" value="F:magnesium ion binding"/>
    <property type="evidence" value="ECO:0007669"/>
    <property type="project" value="TreeGrafter"/>
</dbReference>
<dbReference type="GO" id="GO:0016791">
    <property type="term" value="F:phosphatase activity"/>
    <property type="evidence" value="ECO:0007669"/>
    <property type="project" value="UniProtKB-ARBA"/>
</dbReference>
<dbReference type="CDD" id="cd02605">
    <property type="entry name" value="HAD_SPP"/>
    <property type="match status" value="1"/>
</dbReference>
<dbReference type="Gene3D" id="3.40.50.1000">
    <property type="entry name" value="HAD superfamily/HAD-like"/>
    <property type="match status" value="1"/>
</dbReference>
<dbReference type="Gene3D" id="3.30.70.1410">
    <property type="entry name" value="yhjk (haloacid dehalogenase-like hydrolase protein) domain"/>
    <property type="match status" value="1"/>
</dbReference>
<dbReference type="InterPro" id="IPR036412">
    <property type="entry name" value="HAD-like_sf"/>
</dbReference>
<dbReference type="InterPro" id="IPR006379">
    <property type="entry name" value="HAD-SF_hydro_IIB"/>
</dbReference>
<dbReference type="InterPro" id="IPR023214">
    <property type="entry name" value="HAD_sf"/>
</dbReference>
<dbReference type="InterPro" id="IPR006380">
    <property type="entry name" value="SPP-like_dom"/>
</dbReference>
<dbReference type="NCBIfam" id="TIGR01484">
    <property type="entry name" value="HAD-SF-IIB"/>
    <property type="match status" value="1"/>
</dbReference>
<dbReference type="PANTHER" id="PTHR10000:SF57">
    <property type="entry name" value="KANOSAMINE-6-PHOSPHATE PHOSPHATASE"/>
    <property type="match status" value="1"/>
</dbReference>
<dbReference type="PANTHER" id="PTHR10000">
    <property type="entry name" value="PHOSPHOSERINE PHOSPHATASE"/>
    <property type="match status" value="1"/>
</dbReference>
<dbReference type="Pfam" id="PF05116">
    <property type="entry name" value="S6PP"/>
    <property type="match status" value="1"/>
</dbReference>
<dbReference type="SFLD" id="SFLDG01141">
    <property type="entry name" value="C2.B.1:_Sucrose_Phosphatase_Li"/>
    <property type="match status" value="1"/>
</dbReference>
<dbReference type="SFLD" id="SFLDS00003">
    <property type="entry name" value="Haloacid_Dehalogenase"/>
    <property type="match status" value="1"/>
</dbReference>
<dbReference type="SUPFAM" id="SSF56784">
    <property type="entry name" value="HAD-like"/>
    <property type="match status" value="1"/>
</dbReference>
<accession>Q5HE00</accession>
<protein>
    <recommendedName>
        <fullName>Uncharacterized hydrolase SACOL2196</fullName>
        <ecNumber>3.-.-.-</ecNumber>
    </recommendedName>
</protein>